<reference key="1">
    <citation type="journal article" date="2006" name="PLoS Genet.">
        <title>The complete genome sequence and comparative genome analysis of the high pathogenicity Yersinia enterocolitica strain 8081.</title>
        <authorList>
            <person name="Thomson N.R."/>
            <person name="Howard S."/>
            <person name="Wren B.W."/>
            <person name="Holden M.T.G."/>
            <person name="Crossman L."/>
            <person name="Challis G.L."/>
            <person name="Churcher C."/>
            <person name="Mungall K."/>
            <person name="Brooks K."/>
            <person name="Chillingworth T."/>
            <person name="Feltwell T."/>
            <person name="Abdellah Z."/>
            <person name="Hauser H."/>
            <person name="Jagels K."/>
            <person name="Maddison M."/>
            <person name="Moule S."/>
            <person name="Sanders M."/>
            <person name="Whitehead S."/>
            <person name="Quail M.A."/>
            <person name="Dougan G."/>
            <person name="Parkhill J."/>
            <person name="Prentice M.B."/>
        </authorList>
    </citation>
    <scope>NUCLEOTIDE SEQUENCE [LARGE SCALE GENOMIC DNA]</scope>
    <source>
        <strain>NCTC 13174 / 8081</strain>
    </source>
</reference>
<feature type="chain" id="PRO_1000050904" description="D-aminoacyl-tRNA deacylase">
    <location>
        <begin position="1"/>
        <end position="145"/>
    </location>
</feature>
<feature type="short sequence motif" description="Gly-cisPro motif, important for rejection of L-amino acids" evidence="1">
    <location>
        <begin position="137"/>
        <end position="138"/>
    </location>
</feature>
<protein>
    <recommendedName>
        <fullName evidence="1">D-aminoacyl-tRNA deacylase</fullName>
        <shortName evidence="1">DTD</shortName>
        <ecNumber evidence="1">3.1.1.96</ecNumber>
    </recommendedName>
    <alternativeName>
        <fullName evidence="1">Gly-tRNA(Ala) deacylase</fullName>
    </alternativeName>
</protein>
<sequence length="145" mass="15816">MIALIQRALSANVVVDGEVVGEIGPGLLILLGVEQQDTEQKAQRLCEKVLGYRIFGDENDKMNLNVKQAGGSVLVVSQFTLVADTQKGMRPSFSRGASPAEADRLYQYFVAQCREHGVKTETGLFAADMKVSLVNDGPVTFWLQI</sequence>
<evidence type="ECO:0000255" key="1">
    <source>
        <dbReference type="HAMAP-Rule" id="MF_00518"/>
    </source>
</evidence>
<name>DTD_YERE8</name>
<proteinExistence type="inferred from homology"/>
<keyword id="KW-0963">Cytoplasm</keyword>
<keyword id="KW-0378">Hydrolase</keyword>
<keyword id="KW-0694">RNA-binding</keyword>
<keyword id="KW-0820">tRNA-binding</keyword>
<comment type="function">
    <text evidence="1">An aminoacyl-tRNA editing enzyme that deacylates mischarged D-aminoacyl-tRNAs. Also deacylates mischarged glycyl-tRNA(Ala), protecting cells against glycine mischarging by AlaRS. Acts via tRNA-based rather than protein-based catalysis; rejects L-amino acids rather than detecting D-amino acids in the active site. By recycling D-aminoacyl-tRNA to D-amino acids and free tRNA molecules, this enzyme counteracts the toxicity associated with the formation of D-aminoacyl-tRNA entities in vivo and helps enforce protein L-homochirality.</text>
</comment>
<comment type="catalytic activity">
    <reaction evidence="1">
        <text>glycyl-tRNA(Ala) + H2O = tRNA(Ala) + glycine + H(+)</text>
        <dbReference type="Rhea" id="RHEA:53744"/>
        <dbReference type="Rhea" id="RHEA-COMP:9657"/>
        <dbReference type="Rhea" id="RHEA-COMP:13640"/>
        <dbReference type="ChEBI" id="CHEBI:15377"/>
        <dbReference type="ChEBI" id="CHEBI:15378"/>
        <dbReference type="ChEBI" id="CHEBI:57305"/>
        <dbReference type="ChEBI" id="CHEBI:78442"/>
        <dbReference type="ChEBI" id="CHEBI:78522"/>
        <dbReference type="EC" id="3.1.1.96"/>
    </reaction>
</comment>
<comment type="catalytic activity">
    <reaction evidence="1">
        <text>a D-aminoacyl-tRNA + H2O = a tRNA + a D-alpha-amino acid + H(+)</text>
        <dbReference type="Rhea" id="RHEA:13953"/>
        <dbReference type="Rhea" id="RHEA-COMP:10123"/>
        <dbReference type="Rhea" id="RHEA-COMP:10124"/>
        <dbReference type="ChEBI" id="CHEBI:15377"/>
        <dbReference type="ChEBI" id="CHEBI:15378"/>
        <dbReference type="ChEBI" id="CHEBI:59871"/>
        <dbReference type="ChEBI" id="CHEBI:78442"/>
        <dbReference type="ChEBI" id="CHEBI:79333"/>
        <dbReference type="EC" id="3.1.1.96"/>
    </reaction>
</comment>
<comment type="subunit">
    <text evidence="1">Homodimer.</text>
</comment>
<comment type="subcellular location">
    <subcellularLocation>
        <location evidence="1">Cytoplasm</location>
    </subcellularLocation>
</comment>
<comment type="domain">
    <text evidence="1">A Gly-cisPro motif from one monomer fits into the active site of the other monomer to allow specific chiral rejection of L-amino acids.</text>
</comment>
<comment type="similarity">
    <text evidence="1">Belongs to the DTD family.</text>
</comment>
<organism>
    <name type="scientific">Yersinia enterocolitica serotype O:8 / biotype 1B (strain NCTC 13174 / 8081)</name>
    <dbReference type="NCBI Taxonomy" id="393305"/>
    <lineage>
        <taxon>Bacteria</taxon>
        <taxon>Pseudomonadati</taxon>
        <taxon>Pseudomonadota</taxon>
        <taxon>Gammaproteobacteria</taxon>
        <taxon>Enterobacterales</taxon>
        <taxon>Yersiniaceae</taxon>
        <taxon>Yersinia</taxon>
    </lineage>
</organism>
<accession>A1JHU4</accession>
<gene>
    <name evidence="1" type="primary">dtd</name>
    <name type="ordered locus">YE0032</name>
</gene>
<dbReference type="EC" id="3.1.1.96" evidence="1"/>
<dbReference type="EMBL" id="AM286415">
    <property type="protein sequence ID" value="CAL10177.1"/>
    <property type="molecule type" value="Genomic_DNA"/>
</dbReference>
<dbReference type="RefSeq" id="WP_005175741.1">
    <property type="nucleotide sequence ID" value="NC_008800.1"/>
</dbReference>
<dbReference type="RefSeq" id="YP_001004429.1">
    <property type="nucleotide sequence ID" value="NC_008800.1"/>
</dbReference>
<dbReference type="SMR" id="A1JHU4"/>
<dbReference type="KEGG" id="yen:YE0032"/>
<dbReference type="PATRIC" id="fig|393305.7.peg.122"/>
<dbReference type="eggNOG" id="COG1490">
    <property type="taxonomic scope" value="Bacteria"/>
</dbReference>
<dbReference type="HOGENOM" id="CLU_076901_1_1_6"/>
<dbReference type="OrthoDB" id="9801395at2"/>
<dbReference type="Proteomes" id="UP000000642">
    <property type="component" value="Chromosome"/>
</dbReference>
<dbReference type="GO" id="GO:0005737">
    <property type="term" value="C:cytoplasm"/>
    <property type="evidence" value="ECO:0007669"/>
    <property type="project" value="UniProtKB-SubCell"/>
</dbReference>
<dbReference type="GO" id="GO:0051500">
    <property type="term" value="F:D-tyrosyl-tRNA(Tyr) deacylase activity"/>
    <property type="evidence" value="ECO:0007669"/>
    <property type="project" value="TreeGrafter"/>
</dbReference>
<dbReference type="GO" id="GO:0106026">
    <property type="term" value="F:Gly-tRNA(Ala) deacylase activity"/>
    <property type="evidence" value="ECO:0007669"/>
    <property type="project" value="UniProtKB-UniRule"/>
</dbReference>
<dbReference type="GO" id="GO:0043908">
    <property type="term" value="F:Ser(Gly)-tRNA(Ala) hydrolase activity"/>
    <property type="evidence" value="ECO:0007669"/>
    <property type="project" value="UniProtKB-UniRule"/>
</dbReference>
<dbReference type="GO" id="GO:0000049">
    <property type="term" value="F:tRNA binding"/>
    <property type="evidence" value="ECO:0007669"/>
    <property type="project" value="UniProtKB-UniRule"/>
</dbReference>
<dbReference type="GO" id="GO:0019478">
    <property type="term" value="P:D-amino acid catabolic process"/>
    <property type="evidence" value="ECO:0007669"/>
    <property type="project" value="UniProtKB-UniRule"/>
</dbReference>
<dbReference type="FunFam" id="3.50.80.10:FF:000001">
    <property type="entry name" value="D-aminoacyl-tRNA deacylase"/>
    <property type="match status" value="1"/>
</dbReference>
<dbReference type="Gene3D" id="3.50.80.10">
    <property type="entry name" value="D-tyrosyl-tRNA(Tyr) deacylase"/>
    <property type="match status" value="1"/>
</dbReference>
<dbReference type="HAMAP" id="MF_00518">
    <property type="entry name" value="Deacylase_Dtd"/>
    <property type="match status" value="1"/>
</dbReference>
<dbReference type="InterPro" id="IPR003732">
    <property type="entry name" value="Daa-tRNA_deacyls_DTD"/>
</dbReference>
<dbReference type="InterPro" id="IPR023509">
    <property type="entry name" value="DTD-like_sf"/>
</dbReference>
<dbReference type="NCBIfam" id="TIGR00256">
    <property type="entry name" value="D-aminoacyl-tRNA deacylase"/>
    <property type="match status" value="1"/>
</dbReference>
<dbReference type="PANTHER" id="PTHR10472:SF5">
    <property type="entry name" value="D-AMINOACYL-TRNA DEACYLASE 1"/>
    <property type="match status" value="1"/>
</dbReference>
<dbReference type="PANTHER" id="PTHR10472">
    <property type="entry name" value="D-TYROSYL-TRNA TYR DEACYLASE"/>
    <property type="match status" value="1"/>
</dbReference>
<dbReference type="Pfam" id="PF02580">
    <property type="entry name" value="Tyr_Deacylase"/>
    <property type="match status" value="1"/>
</dbReference>
<dbReference type="SUPFAM" id="SSF69500">
    <property type="entry name" value="DTD-like"/>
    <property type="match status" value="1"/>
</dbReference>